<keyword id="KW-0472">Membrane</keyword>
<keyword id="KW-0520">NAD</keyword>
<keyword id="KW-0521">NADP</keyword>
<keyword id="KW-0618">Plastoquinone</keyword>
<keyword id="KW-0874">Quinone</keyword>
<keyword id="KW-0793">Thylakoid</keyword>
<keyword id="KW-1278">Translocase</keyword>
<keyword id="KW-0813">Transport</keyword>
<evidence type="ECO:0000255" key="1">
    <source>
        <dbReference type="HAMAP-Rule" id="MF_01354"/>
    </source>
</evidence>
<dbReference type="EC" id="7.1.1.-" evidence="1"/>
<dbReference type="EMBL" id="BX548174">
    <property type="protein sequence ID" value="CAE18580.1"/>
    <property type="molecule type" value="Genomic_DNA"/>
</dbReference>
<dbReference type="RefSeq" id="WP_011131760.1">
    <property type="nucleotide sequence ID" value="NC_005072.1"/>
</dbReference>
<dbReference type="SMR" id="Q7V3F4"/>
<dbReference type="STRING" id="59919.PMM0121"/>
<dbReference type="KEGG" id="pmm:PMM0121"/>
<dbReference type="eggNOG" id="ENOG5031XXZ">
    <property type="taxonomic scope" value="Bacteria"/>
</dbReference>
<dbReference type="HOGENOM" id="CLU_195299_0_0_3"/>
<dbReference type="OrthoDB" id="426633at2"/>
<dbReference type="Proteomes" id="UP000001026">
    <property type="component" value="Chromosome"/>
</dbReference>
<dbReference type="GO" id="GO:0031676">
    <property type="term" value="C:plasma membrane-derived thylakoid membrane"/>
    <property type="evidence" value="ECO:0007669"/>
    <property type="project" value="UniProtKB-SubCell"/>
</dbReference>
<dbReference type="GO" id="GO:0016655">
    <property type="term" value="F:oxidoreductase activity, acting on NAD(P)H, quinone or similar compound as acceptor"/>
    <property type="evidence" value="ECO:0007669"/>
    <property type="project" value="UniProtKB-UniRule"/>
</dbReference>
<dbReference type="GO" id="GO:0048038">
    <property type="term" value="F:quinone binding"/>
    <property type="evidence" value="ECO:0007669"/>
    <property type="project" value="UniProtKB-KW"/>
</dbReference>
<dbReference type="HAMAP" id="MF_01354">
    <property type="entry name" value="NDH1_NDH1O"/>
    <property type="match status" value="1"/>
</dbReference>
<dbReference type="InterPro" id="IPR020905">
    <property type="entry name" value="NdhO"/>
</dbReference>
<dbReference type="Pfam" id="PF11910">
    <property type="entry name" value="NdhO"/>
    <property type="match status" value="1"/>
</dbReference>
<organism>
    <name type="scientific">Prochlorococcus marinus subsp. pastoris (strain CCMP1986 / NIES-2087 / MED4)</name>
    <dbReference type="NCBI Taxonomy" id="59919"/>
    <lineage>
        <taxon>Bacteria</taxon>
        <taxon>Bacillati</taxon>
        <taxon>Cyanobacteriota</taxon>
        <taxon>Cyanophyceae</taxon>
        <taxon>Synechococcales</taxon>
        <taxon>Prochlorococcaceae</taxon>
        <taxon>Prochlorococcus</taxon>
    </lineage>
</organism>
<proteinExistence type="inferred from homology"/>
<comment type="function">
    <text evidence="1">NDH-1 shuttles electrons from an unknown electron donor, via FMN and iron-sulfur (Fe-S) centers, to quinones in the respiratory and/or the photosynthetic chain. The immediate electron acceptor for the enzyme in this species is believed to be plastoquinone. Couples the redox reaction to proton translocation, and thus conserves the redox energy in a proton gradient. Cyanobacterial NDH-1 also plays a role in inorganic carbon-concentration.</text>
</comment>
<comment type="catalytic activity">
    <reaction evidence="1">
        <text>a plastoquinone + NADH + (n+1) H(+)(in) = a plastoquinol + NAD(+) + n H(+)(out)</text>
        <dbReference type="Rhea" id="RHEA:42608"/>
        <dbReference type="Rhea" id="RHEA-COMP:9561"/>
        <dbReference type="Rhea" id="RHEA-COMP:9562"/>
        <dbReference type="ChEBI" id="CHEBI:15378"/>
        <dbReference type="ChEBI" id="CHEBI:17757"/>
        <dbReference type="ChEBI" id="CHEBI:57540"/>
        <dbReference type="ChEBI" id="CHEBI:57945"/>
        <dbReference type="ChEBI" id="CHEBI:62192"/>
    </reaction>
</comment>
<comment type="catalytic activity">
    <reaction evidence="1">
        <text>a plastoquinone + NADPH + (n+1) H(+)(in) = a plastoquinol + NADP(+) + n H(+)(out)</text>
        <dbReference type="Rhea" id="RHEA:42612"/>
        <dbReference type="Rhea" id="RHEA-COMP:9561"/>
        <dbReference type="Rhea" id="RHEA-COMP:9562"/>
        <dbReference type="ChEBI" id="CHEBI:15378"/>
        <dbReference type="ChEBI" id="CHEBI:17757"/>
        <dbReference type="ChEBI" id="CHEBI:57783"/>
        <dbReference type="ChEBI" id="CHEBI:58349"/>
        <dbReference type="ChEBI" id="CHEBI:62192"/>
    </reaction>
</comment>
<comment type="subunit">
    <text evidence="1">NDH-1 can be composed of about 15 different subunits; different subcomplexes with different compositions have been identified which probably have different functions.</text>
</comment>
<comment type="subcellular location">
    <subcellularLocation>
        <location evidence="1">Cellular thylakoid membrane</location>
        <topology evidence="1">Peripheral membrane protein</topology>
        <orientation evidence="1">Cytoplasmic side</orientation>
    </subcellularLocation>
</comment>
<comment type="similarity">
    <text evidence="1">Belongs to the complex I NdhO subunit family.</text>
</comment>
<protein>
    <recommendedName>
        <fullName evidence="1">NAD(P)H-quinone oxidoreductase subunit O</fullName>
        <ecNumber evidence="1">7.1.1.-</ecNumber>
    </recommendedName>
    <alternativeName>
        <fullName evidence="1">NAD(P)H dehydrogenase I subunit O</fullName>
    </alternativeName>
    <alternativeName>
        <fullName>NDH-1 subunit O</fullName>
    </alternativeName>
    <alternativeName>
        <fullName>NDH-O</fullName>
    </alternativeName>
</protein>
<accession>Q7V3F4</accession>
<feature type="chain" id="PRO_0000353649" description="NAD(P)H-quinone oxidoreductase subunit O">
    <location>
        <begin position="1"/>
        <end position="80"/>
    </location>
</feature>
<gene>
    <name evidence="1" type="primary">ndhO</name>
    <name type="ordered locus">PMM0121</name>
</gene>
<reference key="1">
    <citation type="journal article" date="2003" name="Nature">
        <title>Genome divergence in two Prochlorococcus ecotypes reflects oceanic niche differentiation.</title>
        <authorList>
            <person name="Rocap G."/>
            <person name="Larimer F.W."/>
            <person name="Lamerdin J.E."/>
            <person name="Malfatti S."/>
            <person name="Chain P."/>
            <person name="Ahlgren N.A."/>
            <person name="Arellano A."/>
            <person name="Coleman M."/>
            <person name="Hauser L."/>
            <person name="Hess W.R."/>
            <person name="Johnson Z.I."/>
            <person name="Land M.L."/>
            <person name="Lindell D."/>
            <person name="Post A.F."/>
            <person name="Regala W."/>
            <person name="Shah M."/>
            <person name="Shaw S.L."/>
            <person name="Steglich C."/>
            <person name="Sullivan M.B."/>
            <person name="Ting C.S."/>
            <person name="Tolonen A."/>
            <person name="Webb E.A."/>
            <person name="Zinser E.R."/>
            <person name="Chisholm S.W."/>
        </authorList>
    </citation>
    <scope>NUCLEOTIDE SEQUENCE [LARGE SCALE GENOMIC DNA]</scope>
    <source>
        <strain>CCMP1986 / NIES-2087 / MED4</strain>
    </source>
</reference>
<name>NDHO_PROMP</name>
<sequence>MTESIPKKPLKKGSLVFIDKSIYDGSVEALASDQDLPSYIFEGPGEILSIKEEYAQVRWRRPVPDVWFKLDQIKEYIVSE</sequence>